<proteinExistence type="inferred from homology"/>
<accession>Q2PIU8</accession>
<sequence>MNDEAVAFSQAVQVVDPDVRAHVYSLVTALGGFNGEDADRYVLGDDALACLRDIRRWLKLYDEKYHRMDVARCLGEANLVNGDLLPIFSLWWSTGQKSKYMSRIALACLELLVPLTWPLEVHGEMTVNHHRHFPYLQHAQVSYKRGLLSRGDLNFLRTIIRIGLPSMAVPRSERTTRDDGILKLMLYLLRNIVVIAPNARLAADGDEEETSRSATINAFQAQDVFALLLTMCSNVGDDFNMQDVILLEILFHLVKGVNVQKLFMDDAQRSAKHTDELDTLLKQESSLRREYAKNAPTRHGRFGTMIWVKRDDAKVSTVSGQDVLKDSQATLQKMDESKKWNRPQPRKTHEDSVLNNDFSTPAHLNSTASRNLRMFVEEFLDSGFNPLFTHVRKALEREADRVVPINSRQFFYTVAWFLDAERARRARQQEMHLQNGKPMKELERDGFGLVASVLDQETLVFLNRSMQISFDQKDWEDLNAEMRCFTQILLTVQEMTQSLLEEDQEIAENIQNRIFYEETTHDRVLAIMREYKGQGFGYLDACTELSHVFLRMLERYSKENVDMQVRSRRRSRRKNMETQVAAPEDNNEEHASDDEDIMEAERICRERKFDFKRFAAKFCNQKCVDTFVAFTKFFRELNSDQLKRAHRYFYRIAFKQEMSVLLFRVDILNLFYTMIKGPGAMDSSKPIFKEWEELVRQVIRRMIKKIDQRPALITELLFSKMNSTLFYLEYGHERQTLPSVRRAPAELEVNPSEATTQEDKIKIVIGALVMDGQADLVAWVSNVLGTAAEERESWEAYEDAQRDEAQGAPRAPNPMIAVLPHDDACKQAMYFNAKLRLLMTLVGFERLGMEDVVGASWVVPSSQGSKDLKGIKLTIDKCLEDPYTGDIEHDPRQMLRRKYKPDDKEHNRQTTLDVDFGSESEGEDVPDGPLFPPNPRSKANAPNDSKTRRKNREAVGEREPIDEDTLEARRKARQENTRARLAKIKSELFVHASDDESDEEADKEFFDLEEKRRKEQAARVRKALLTGVVDEIGRKANKKSERKRLSNSGKSDTQSKRQRRGRTTEALDEDDDIIMDGAVARSSDHATEDDENTSATSDEDDEFDFDDNLAFRRDRDLDRDPVLPSHAEDMQPTDTRELRDNDENAPVATLARRRLRAGFVIDSDSE</sequence>
<organism>
    <name type="scientific">Aspergillus oryzae (strain ATCC 42149 / RIB 40)</name>
    <name type="common">Yellow koji mold</name>
    <dbReference type="NCBI Taxonomy" id="510516"/>
    <lineage>
        <taxon>Eukaryota</taxon>
        <taxon>Fungi</taxon>
        <taxon>Dikarya</taxon>
        <taxon>Ascomycota</taxon>
        <taxon>Pezizomycotina</taxon>
        <taxon>Eurotiomycetes</taxon>
        <taxon>Eurotiomycetidae</taxon>
        <taxon>Eurotiales</taxon>
        <taxon>Aspergillaceae</taxon>
        <taxon>Aspergillus</taxon>
        <taxon>Aspergillus subgen. Circumdati</taxon>
    </lineage>
</organism>
<reference key="1">
    <citation type="journal article" date="2005" name="Nature">
        <title>Genome sequencing and analysis of Aspergillus oryzae.</title>
        <authorList>
            <person name="Machida M."/>
            <person name="Asai K."/>
            <person name="Sano M."/>
            <person name="Tanaka T."/>
            <person name="Kumagai T."/>
            <person name="Terai G."/>
            <person name="Kusumoto K."/>
            <person name="Arima T."/>
            <person name="Akita O."/>
            <person name="Kashiwagi Y."/>
            <person name="Abe K."/>
            <person name="Gomi K."/>
            <person name="Horiuchi H."/>
            <person name="Kitamoto K."/>
            <person name="Kobayashi T."/>
            <person name="Takeuchi M."/>
            <person name="Denning D.W."/>
            <person name="Galagan J.E."/>
            <person name="Nierman W.C."/>
            <person name="Yu J."/>
            <person name="Archer D.B."/>
            <person name="Bennett J.W."/>
            <person name="Bhatnagar D."/>
            <person name="Cleveland T.E."/>
            <person name="Fedorova N.D."/>
            <person name="Gotoh O."/>
            <person name="Horikawa H."/>
            <person name="Hosoyama A."/>
            <person name="Ichinomiya M."/>
            <person name="Igarashi R."/>
            <person name="Iwashita K."/>
            <person name="Juvvadi P.R."/>
            <person name="Kato M."/>
            <person name="Kato Y."/>
            <person name="Kin T."/>
            <person name="Kokubun A."/>
            <person name="Maeda H."/>
            <person name="Maeyama N."/>
            <person name="Maruyama J."/>
            <person name="Nagasaki H."/>
            <person name="Nakajima T."/>
            <person name="Oda K."/>
            <person name="Okada K."/>
            <person name="Paulsen I."/>
            <person name="Sakamoto K."/>
            <person name="Sawano T."/>
            <person name="Takahashi M."/>
            <person name="Takase K."/>
            <person name="Terabayashi Y."/>
            <person name="Wortman J.R."/>
            <person name="Yamada O."/>
            <person name="Yamagata Y."/>
            <person name="Anazawa H."/>
            <person name="Hata Y."/>
            <person name="Koide Y."/>
            <person name="Komori T."/>
            <person name="Koyama Y."/>
            <person name="Minetoki T."/>
            <person name="Suharnan S."/>
            <person name="Tanaka A."/>
            <person name="Isono K."/>
            <person name="Kuhara S."/>
            <person name="Ogasawara N."/>
            <person name="Kikuchi H."/>
        </authorList>
    </citation>
    <scope>NUCLEOTIDE SEQUENCE [LARGE SCALE GENOMIC DNA]</scope>
    <source>
        <strain>ATCC 42149 / RIB 40</strain>
    </source>
</reference>
<evidence type="ECO:0000250" key="1"/>
<evidence type="ECO:0000256" key="2">
    <source>
        <dbReference type="SAM" id="MobiDB-lite"/>
    </source>
</evidence>
<evidence type="ECO:0000305" key="3"/>
<name>TOF1_ASPOR</name>
<gene>
    <name type="primary">tof1</name>
    <name type="ORF">AO090206000054</name>
</gene>
<dbReference type="EMBL" id="BA000055">
    <property type="protein sequence ID" value="BAE65426.1"/>
    <property type="molecule type" value="Genomic_DNA"/>
</dbReference>
<dbReference type="RefSeq" id="XP_001826559.1">
    <property type="nucleotide sequence ID" value="XM_001826507.2"/>
</dbReference>
<dbReference type="SMR" id="Q2PIU8"/>
<dbReference type="STRING" id="510516.Q2PIU8"/>
<dbReference type="EnsemblFungi" id="BAE65426">
    <property type="protein sequence ID" value="BAE65426"/>
    <property type="gene ID" value="AO090206000054"/>
</dbReference>
<dbReference type="GeneID" id="5998675"/>
<dbReference type="KEGG" id="aor:AO090206000054"/>
<dbReference type="VEuPathDB" id="FungiDB:AO090206000054"/>
<dbReference type="HOGENOM" id="CLU_004390_0_0_1"/>
<dbReference type="OMA" id="VNHHRHT"/>
<dbReference type="OrthoDB" id="116241at5052"/>
<dbReference type="Proteomes" id="UP000006564">
    <property type="component" value="Chromosome 7"/>
</dbReference>
<dbReference type="GO" id="GO:0031298">
    <property type="term" value="C:replication fork protection complex"/>
    <property type="evidence" value="ECO:0007669"/>
    <property type="project" value="TreeGrafter"/>
</dbReference>
<dbReference type="GO" id="GO:0003677">
    <property type="term" value="F:DNA binding"/>
    <property type="evidence" value="ECO:0007669"/>
    <property type="project" value="TreeGrafter"/>
</dbReference>
<dbReference type="GO" id="GO:0006281">
    <property type="term" value="P:DNA repair"/>
    <property type="evidence" value="ECO:0007669"/>
    <property type="project" value="UniProtKB-KW"/>
</dbReference>
<dbReference type="GO" id="GO:0000076">
    <property type="term" value="P:DNA replication checkpoint signaling"/>
    <property type="evidence" value="ECO:0007669"/>
    <property type="project" value="TreeGrafter"/>
</dbReference>
<dbReference type="GO" id="GO:0051321">
    <property type="term" value="P:meiotic cell cycle"/>
    <property type="evidence" value="ECO:0007669"/>
    <property type="project" value="UniProtKB-KW"/>
</dbReference>
<dbReference type="GO" id="GO:0043111">
    <property type="term" value="P:replication fork arrest"/>
    <property type="evidence" value="ECO:0007669"/>
    <property type="project" value="TreeGrafter"/>
</dbReference>
<dbReference type="InterPro" id="IPR044998">
    <property type="entry name" value="Timeless"/>
</dbReference>
<dbReference type="InterPro" id="IPR006906">
    <property type="entry name" value="Timeless_N"/>
</dbReference>
<dbReference type="PANTHER" id="PTHR22940:SF4">
    <property type="entry name" value="PROTEIN TIMELESS HOMOLOG"/>
    <property type="match status" value="1"/>
</dbReference>
<dbReference type="PANTHER" id="PTHR22940">
    <property type="entry name" value="TIMEOUT/TIMELESS-2"/>
    <property type="match status" value="1"/>
</dbReference>
<dbReference type="Pfam" id="PF04821">
    <property type="entry name" value="TIMELESS"/>
    <property type="match status" value="1"/>
</dbReference>
<protein>
    <recommendedName>
        <fullName>Topoisomerase 1-associated factor 1</fullName>
    </recommendedName>
</protein>
<feature type="chain" id="PRO_0000301731" description="Topoisomerase 1-associated factor 1">
    <location>
        <begin position="1"/>
        <end position="1166"/>
    </location>
</feature>
<feature type="region of interest" description="Disordered" evidence="2">
    <location>
        <begin position="333"/>
        <end position="358"/>
    </location>
</feature>
<feature type="region of interest" description="Disordered" evidence="2">
    <location>
        <begin position="564"/>
        <end position="594"/>
    </location>
</feature>
<feature type="region of interest" description="Disordered" evidence="2">
    <location>
        <begin position="881"/>
        <end position="981"/>
    </location>
</feature>
<feature type="region of interest" description="Disordered" evidence="2">
    <location>
        <begin position="1023"/>
        <end position="1145"/>
    </location>
</feature>
<feature type="compositionally biased region" description="Acidic residues" evidence="2">
    <location>
        <begin position="585"/>
        <end position="594"/>
    </location>
</feature>
<feature type="compositionally biased region" description="Basic and acidic residues" evidence="2">
    <location>
        <begin position="881"/>
        <end position="893"/>
    </location>
</feature>
<feature type="compositionally biased region" description="Acidic residues" evidence="2">
    <location>
        <begin position="916"/>
        <end position="926"/>
    </location>
</feature>
<feature type="compositionally biased region" description="Basic and acidic residues" evidence="2">
    <location>
        <begin position="966"/>
        <end position="981"/>
    </location>
</feature>
<feature type="compositionally biased region" description="Acidic residues" evidence="2">
    <location>
        <begin position="1087"/>
        <end position="1107"/>
    </location>
</feature>
<feature type="compositionally biased region" description="Basic and acidic residues" evidence="2">
    <location>
        <begin position="1109"/>
        <end position="1142"/>
    </location>
</feature>
<comment type="function">
    <text evidence="1">Involved in chromosome segregation during meiosis and DNA damage repair.</text>
</comment>
<comment type="subcellular location">
    <subcellularLocation>
        <location evidence="1">Nucleus</location>
    </subcellularLocation>
</comment>
<comment type="similarity">
    <text evidence="3">Belongs to the timeless family.</text>
</comment>
<keyword id="KW-0131">Cell cycle</keyword>
<keyword id="KW-0227">DNA damage</keyword>
<keyword id="KW-0234">DNA repair</keyword>
<keyword id="KW-0236">DNA replication inhibitor</keyword>
<keyword id="KW-0469">Meiosis</keyword>
<keyword id="KW-0539">Nucleus</keyword>
<keyword id="KW-1185">Reference proteome</keyword>